<name>APH1A_HUMAN</name>
<comment type="function">
    <text evidence="2 3 4 5 7 9 10 12 13 19">Non-catalytic subunit of the gamma-secretase complex, an endoprotease complex that catalyzes the intramembrane cleavage of integral membrane proteins such as Notch receptors and APP (amyloid-beta precursor protein) (PubMed:12297508, PubMed:12522139, PubMed:12679784, PubMed:12763021, PubMed:25043039, PubMed:26280335, PubMed:30598546, PubMed:30630874). Required for normal gamma-secretase assembly (PubMed:12471034, PubMed:12522139, PubMed:12763021, PubMed:19369254). The gamma-secretase complex plays a role in Notch and Wnt signaling cascades and regulation of downstream processes via its role in processing key regulatory proteins, and by regulating cytosolic CTNNB1 levels (Probable).</text>
</comment>
<comment type="subunit">
    <text evidence="2 6 8 9 10 11 12 13">The functional gamma-secretase complex is composed of at least four polypeptides: a presenilin homodimer (PSEN1 or PSEN2), nicastrin (NCSTN), APH1 (APH1A or APH1B) and PSENEN/PEN2 (PubMed:12297508, PubMed:12740439, PubMed:19369254, PubMed:25043039, PubMed:26280335, PubMed:26623517, PubMed:30598546, PubMed:30630874).</text>
</comment>
<comment type="interaction">
    <interactant intactId="EBI-2606935">
        <id>Q96BI3</id>
    </interactant>
    <interactant intactId="EBI-12109402">
        <id>Q86W74-2</id>
        <label>ANKRD46</label>
    </interactant>
    <organismsDiffer>false</organismsDiffer>
    <experiments>3</experiments>
</comment>
<comment type="interaction">
    <interactant intactId="EBI-2606935">
        <id>Q96BI3</id>
    </interactant>
    <interactant intactId="EBI-715495">
        <id>P05090</id>
        <label>APOD</label>
    </interactant>
    <organismsDiffer>false</organismsDiffer>
    <experiments>3</experiments>
</comment>
<comment type="interaction">
    <interactant intactId="EBI-2606935">
        <id>Q96BI3</id>
    </interactant>
    <interactant intactId="EBI-77613">
        <id>P05067</id>
        <label>APP</label>
    </interactant>
    <organismsDiffer>false</organismsDiffer>
    <experiments>3</experiments>
</comment>
<comment type="interaction">
    <interactant intactId="EBI-2606935">
        <id>Q96BI3</id>
    </interactant>
    <interactant intactId="EBI-1172335">
        <id>P07306</id>
        <label>ASGR1</label>
    </interactant>
    <organismsDiffer>false</organismsDiffer>
    <experiments>3</experiments>
</comment>
<comment type="interaction">
    <interactant intactId="EBI-2606935">
        <id>Q96BI3</id>
    </interactant>
    <interactant intactId="EBI-997830">
        <id>Q15438</id>
        <label>CYTH1</label>
    </interactant>
    <organismsDiffer>false</organismsDiffer>
    <experiments>3</experiments>
</comment>
<comment type="interaction">
    <interactant intactId="EBI-2606935">
        <id>Q96BI3</id>
    </interactant>
    <interactant intactId="EBI-3385283">
        <id>Q9Y3D6</id>
        <label>FIS1</label>
    </interactant>
    <organismsDiffer>false</organismsDiffer>
    <experiments>3</experiments>
</comment>
<comment type="interaction">
    <interactant intactId="EBI-2606935">
        <id>Q96BI3</id>
    </interactant>
    <interactant intactId="EBI-713304">
        <id>Q9H0Q3</id>
        <label>FXYD6</label>
    </interactant>
    <organismsDiffer>false</organismsDiffer>
    <experiments>3</experiments>
</comment>
<comment type="interaction">
    <interactant intactId="EBI-2606935">
        <id>Q96BI3</id>
    </interactant>
    <interactant intactId="EBI-515315">
        <id>P06241</id>
        <label>FYN</label>
    </interactant>
    <organismsDiffer>false</organismsDiffer>
    <experiments>3</experiments>
</comment>
<comment type="interaction">
    <interactant intactId="EBI-2606935">
        <id>Q96BI3</id>
    </interactant>
    <interactant intactId="EBI-720480">
        <id>P24593</id>
        <label>IGFBP5</label>
    </interactant>
    <organismsDiffer>false</organismsDiffer>
    <experiments>3</experiments>
</comment>
<comment type="interaction">
    <interactant intactId="EBI-2606935">
        <id>Q96BI3</id>
    </interactant>
    <interactant intactId="EBI-8070286">
        <id>O43561-2</id>
        <label>LAT</label>
    </interactant>
    <organismsDiffer>false</organismsDiffer>
    <experiments>3</experiments>
</comment>
<comment type="interaction">
    <interactant intactId="EBI-2606935">
        <id>Q96BI3</id>
    </interactant>
    <interactant intactId="EBI-2858252">
        <id>Q6ZSS7</id>
        <label>MFSD6</label>
    </interactant>
    <organismsDiffer>false</organismsDiffer>
    <experiments>3</experiments>
</comment>
<comment type="interaction">
    <interactant intactId="EBI-2606935">
        <id>Q96BI3</id>
    </interactant>
    <interactant intactId="EBI-711788">
        <id>Q00013</id>
        <label>MPP1</label>
    </interactant>
    <organismsDiffer>false</organismsDiffer>
    <experiments>3</experiments>
</comment>
<comment type="interaction">
    <interactant intactId="EBI-2606935">
        <id>Q96BI3</id>
    </interactant>
    <interactant intactId="EBI-9537218">
        <id>Q96G30</id>
        <label>MRAP2</label>
    </interactant>
    <organismsDiffer>false</organismsDiffer>
    <experiments>3</experiments>
</comment>
<comment type="interaction">
    <interactant intactId="EBI-2606935">
        <id>Q96BI3</id>
    </interactant>
    <interactant intactId="EBI-998440">
        <id>Q92542</id>
        <label>NCSTN</label>
    </interactant>
    <organismsDiffer>false</organismsDiffer>
    <experiments>4</experiments>
</comment>
<comment type="interaction">
    <interactant intactId="EBI-2606935">
        <id>Q96BI3</id>
    </interactant>
    <interactant intactId="EBI-297277">
        <id>P49768</id>
        <label>PSEN1</label>
    </interactant>
    <organismsDiffer>false</organismsDiffer>
    <experiments>3</experiments>
</comment>
<comment type="interaction">
    <interactant intactId="EBI-2606935">
        <id>Q96BI3</id>
    </interactant>
    <interactant intactId="EBI-745846">
        <id>P57086</id>
        <label>SCAND1</label>
    </interactant>
    <organismsDiffer>false</organismsDiffer>
    <experiments>3</experiments>
</comment>
<comment type="interaction">
    <interactant intactId="EBI-2606935">
        <id>Q96BI3</id>
    </interactant>
    <interactant intactId="EBI-10329948">
        <id>Q9Y6X1</id>
        <label>SERP1</label>
    </interactant>
    <organismsDiffer>false</organismsDiffer>
    <experiments>3</experiments>
</comment>
<comment type="interaction">
    <interactant intactId="EBI-2606935">
        <id>Q96BI3</id>
    </interactant>
    <interactant intactId="EBI-10314552">
        <id>Q9NVC3</id>
        <label>SLC38A7</label>
    </interactant>
    <organismsDiffer>false</organismsDiffer>
    <experiments>3</experiments>
</comment>
<comment type="interaction">
    <interactant intactId="EBI-2606935">
        <id>Q96BI3</id>
    </interactant>
    <interactant intactId="EBI-2823239">
        <id>Q9NUM3</id>
        <label>SLC39A9</label>
    </interactant>
    <organismsDiffer>false</organismsDiffer>
    <experiments>3</experiments>
</comment>
<comment type="interaction">
    <interactant intactId="EBI-2606935">
        <id>Q96BI3</id>
    </interactant>
    <interactant intactId="EBI-10226799">
        <id>Q0VAQ4</id>
        <label>SMAGP</label>
    </interactant>
    <organismsDiffer>false</organismsDiffer>
    <experiments>3</experiments>
</comment>
<comment type="interaction">
    <interactant intactId="EBI-2606935">
        <id>Q96BI3</id>
    </interactant>
    <interactant intactId="EBI-2844246">
        <id>Q9NV12</id>
        <label>TMEM140</label>
    </interactant>
    <organismsDiffer>false</organismsDiffer>
    <experiments>3</experiments>
</comment>
<comment type="interaction">
    <interactant intactId="EBI-2606935">
        <id>Q96BI3</id>
    </interactant>
    <interactant intactId="EBI-10173151">
        <id>A2RU14</id>
        <label>TMEM218</label>
    </interactant>
    <organismsDiffer>false</organismsDiffer>
    <experiments>3</experiments>
</comment>
<comment type="interaction">
    <interactant intactId="EBI-2606935">
        <id>Q96BI3</id>
    </interactant>
    <interactant intactId="EBI-11988865">
        <id>A5PKU2</id>
        <label>TUSC5</label>
    </interactant>
    <organismsDiffer>false</organismsDiffer>
    <experiments>3</experiments>
</comment>
<comment type="interaction">
    <interactant intactId="EBI-25922794">
        <id>Q96BI3-2</id>
    </interactant>
    <interactant intactId="EBI-351428">
        <id>P61158</id>
        <label>ACTR3</label>
    </interactant>
    <organismsDiffer>false</organismsDiffer>
    <experiments>3</experiments>
</comment>
<comment type="subcellular location">
    <subcellularLocation>
        <location evidence="4">Endoplasmic reticulum membrane</location>
        <topology evidence="9 10 11 12 13">Multi-pass membrane protein</topology>
    </subcellularLocation>
    <subcellularLocation>
        <location evidence="4">Golgi apparatus</location>
        <location evidence="4">Golgi stack membrane</location>
        <topology evidence="9 10 11 12 13">Multi-pass membrane protein</topology>
    </subcellularLocation>
    <text evidence="4">Predominantly located in the endoplasmic reticulum and in the cis-Golgi.</text>
</comment>
<comment type="alternative products">
    <event type="alternative splicing"/>
    <isoform>
        <id>Q96BI3-1</id>
        <name>1</name>
        <name>L</name>
        <name>Aph-alpha1</name>
        <sequence type="displayed"/>
    </isoform>
    <isoform>
        <id>Q96BI3-2</id>
        <name>2</name>
        <name>S</name>
        <name>Aph-alpha2</name>
        <sequence type="described" ref="VSP_008355 VSP_008356"/>
    </isoform>
    <isoform>
        <id>Q96BI3-3</id>
        <name>3</name>
        <sequence type="described" ref="VSP_045424"/>
    </isoform>
</comment>
<comment type="tissue specificity">
    <text evidence="1">Widely expressed. Expressed in leukocytes, lung, placenta, small intestine, liver, kidney, spleen thymus, skeletal muscle, heart and brain. Isoform 1 and isoform 2 are nearly expressed at the same level.</text>
</comment>
<comment type="similarity">
    <text evidence="19">Belongs to the APH-1 family.</text>
</comment>
<comment type="sequence caution" evidence="19">
    <conflict type="frameshift">
        <sequence resource="EMBL-CDS" id="AAD34072"/>
    </conflict>
</comment>
<comment type="sequence caution" evidence="19">
    <conflict type="frameshift">
        <sequence resource="EMBL-CDS" id="AAN63816"/>
    </conflict>
</comment>
<proteinExistence type="evidence at protein level"/>
<reference key="1">
    <citation type="journal article" date="2002" name="J. Biol. Chem.">
        <title>Mammalian APH-1 interacts with presenilin and nicastrin and is required for intramembrane proteolysis of amyloid-beta precursor protein and Notch.</title>
        <authorList>
            <person name="Lee S.-F."/>
            <person name="Shah S."/>
            <person name="Li H."/>
            <person name="Yu C."/>
            <person name="Han W."/>
            <person name="Yu G."/>
        </authorList>
    </citation>
    <scope>NUCLEOTIDE SEQUENCE [MRNA] (ISOFORM 1)</scope>
    <scope>FUNCTION</scope>
    <scope>INTERACTION WITH PSEN1; PSEN2 AND NCSTN</scope>
    <source>
        <tissue>Glioblastoma</tissue>
    </source>
</reference>
<reference key="2">
    <citation type="submission" date="2002-05" db="EMBL/GenBank/DDBJ databases">
        <title>PSF is essential for gamma-secretase activity and stabilization of presenilin and nicastrin.</title>
        <authorList>
            <person name="Lee H.-J."/>
            <person name="Kim T.-W."/>
        </authorList>
    </citation>
    <scope>NUCLEOTIDE SEQUENCE [MRNA] (ISOFORMS 1 AND 2)</scope>
</reference>
<reference key="3">
    <citation type="journal article" date="2000" name="Genome Res.">
        <title>Identification of novel human genes evolutionarily conserved in Caenorhabditis elegans by comparative proteomics.</title>
        <authorList>
            <person name="Lai C.-H."/>
            <person name="Chou C.-Y."/>
            <person name="Ch'ang L.-Y."/>
            <person name="Liu C.-S."/>
            <person name="Lin W.-C."/>
        </authorList>
    </citation>
    <scope>NUCLEOTIDE SEQUENCE [LARGE SCALE MRNA] (ISOFORM 2)</scope>
</reference>
<reference key="4">
    <citation type="journal article" date="2003" name="Genome Res.">
        <title>The secreted protein discovery initiative (SPDI), a large-scale effort to identify novel human secreted and transmembrane proteins: a bioinformatics assessment.</title>
        <authorList>
            <person name="Clark H.F."/>
            <person name="Gurney A.L."/>
            <person name="Abaya E."/>
            <person name="Baker K."/>
            <person name="Baldwin D.T."/>
            <person name="Brush J."/>
            <person name="Chen J."/>
            <person name="Chow B."/>
            <person name="Chui C."/>
            <person name="Crowley C."/>
            <person name="Currell B."/>
            <person name="Deuel B."/>
            <person name="Dowd P."/>
            <person name="Eaton D."/>
            <person name="Foster J.S."/>
            <person name="Grimaldi C."/>
            <person name="Gu Q."/>
            <person name="Hass P.E."/>
            <person name="Heldens S."/>
            <person name="Huang A."/>
            <person name="Kim H.S."/>
            <person name="Klimowski L."/>
            <person name="Jin Y."/>
            <person name="Johnson S."/>
            <person name="Lee J."/>
            <person name="Lewis L."/>
            <person name="Liao D."/>
            <person name="Mark M.R."/>
            <person name="Robbie E."/>
            <person name="Sanchez C."/>
            <person name="Schoenfeld J."/>
            <person name="Seshagiri S."/>
            <person name="Simmons L."/>
            <person name="Singh J."/>
            <person name="Smith V."/>
            <person name="Stinson J."/>
            <person name="Vagts A."/>
            <person name="Vandlen R.L."/>
            <person name="Watanabe C."/>
            <person name="Wieand D."/>
            <person name="Woods K."/>
            <person name="Xie M.-H."/>
            <person name="Yansura D.G."/>
            <person name="Yi S."/>
            <person name="Yu G."/>
            <person name="Yuan J."/>
            <person name="Zhang M."/>
            <person name="Zhang Z."/>
            <person name="Goddard A.D."/>
            <person name="Wood W.I."/>
            <person name="Godowski P.J."/>
            <person name="Gray A.M."/>
        </authorList>
    </citation>
    <scope>NUCLEOTIDE SEQUENCE [LARGE SCALE MRNA] (ISOFORM 2)</scope>
</reference>
<reference key="5">
    <citation type="journal article" date="2004" name="Nat. Genet.">
        <title>Complete sequencing and characterization of 21,243 full-length human cDNAs.</title>
        <authorList>
            <person name="Ota T."/>
            <person name="Suzuki Y."/>
            <person name="Nishikawa T."/>
            <person name="Otsuki T."/>
            <person name="Sugiyama T."/>
            <person name="Irie R."/>
            <person name="Wakamatsu A."/>
            <person name="Hayashi K."/>
            <person name="Sato H."/>
            <person name="Nagai K."/>
            <person name="Kimura K."/>
            <person name="Makita H."/>
            <person name="Sekine M."/>
            <person name="Obayashi M."/>
            <person name="Nishi T."/>
            <person name="Shibahara T."/>
            <person name="Tanaka T."/>
            <person name="Ishii S."/>
            <person name="Yamamoto J."/>
            <person name="Saito K."/>
            <person name="Kawai Y."/>
            <person name="Isono Y."/>
            <person name="Nakamura Y."/>
            <person name="Nagahari K."/>
            <person name="Murakami K."/>
            <person name="Yasuda T."/>
            <person name="Iwayanagi T."/>
            <person name="Wagatsuma M."/>
            <person name="Shiratori A."/>
            <person name="Sudo H."/>
            <person name="Hosoiri T."/>
            <person name="Kaku Y."/>
            <person name="Kodaira H."/>
            <person name="Kondo H."/>
            <person name="Sugawara M."/>
            <person name="Takahashi M."/>
            <person name="Kanda K."/>
            <person name="Yokoi T."/>
            <person name="Furuya T."/>
            <person name="Kikkawa E."/>
            <person name="Omura Y."/>
            <person name="Abe K."/>
            <person name="Kamihara K."/>
            <person name="Katsuta N."/>
            <person name="Sato K."/>
            <person name="Tanikawa M."/>
            <person name="Yamazaki M."/>
            <person name="Ninomiya K."/>
            <person name="Ishibashi T."/>
            <person name="Yamashita H."/>
            <person name="Murakawa K."/>
            <person name="Fujimori K."/>
            <person name="Tanai H."/>
            <person name="Kimata M."/>
            <person name="Watanabe M."/>
            <person name="Hiraoka S."/>
            <person name="Chiba Y."/>
            <person name="Ishida S."/>
            <person name="Ono Y."/>
            <person name="Takiguchi S."/>
            <person name="Watanabe S."/>
            <person name="Yosida M."/>
            <person name="Hotuta T."/>
            <person name="Kusano J."/>
            <person name="Kanehori K."/>
            <person name="Takahashi-Fujii A."/>
            <person name="Hara H."/>
            <person name="Tanase T.-O."/>
            <person name="Nomura Y."/>
            <person name="Togiya S."/>
            <person name="Komai F."/>
            <person name="Hara R."/>
            <person name="Takeuchi K."/>
            <person name="Arita M."/>
            <person name="Imose N."/>
            <person name="Musashino K."/>
            <person name="Yuuki H."/>
            <person name="Oshima A."/>
            <person name="Sasaki N."/>
            <person name="Aotsuka S."/>
            <person name="Yoshikawa Y."/>
            <person name="Matsunawa H."/>
            <person name="Ichihara T."/>
            <person name="Shiohata N."/>
            <person name="Sano S."/>
            <person name="Moriya S."/>
            <person name="Momiyama H."/>
            <person name="Satoh N."/>
            <person name="Takami S."/>
            <person name="Terashima Y."/>
            <person name="Suzuki O."/>
            <person name="Nakagawa S."/>
            <person name="Senoh A."/>
            <person name="Mizoguchi H."/>
            <person name="Goto Y."/>
            <person name="Shimizu F."/>
            <person name="Wakebe H."/>
            <person name="Hishigaki H."/>
            <person name="Watanabe T."/>
            <person name="Sugiyama A."/>
            <person name="Takemoto M."/>
            <person name="Kawakami B."/>
            <person name="Yamazaki M."/>
            <person name="Watanabe K."/>
            <person name="Kumagai A."/>
            <person name="Itakura S."/>
            <person name="Fukuzumi Y."/>
            <person name="Fujimori Y."/>
            <person name="Komiyama M."/>
            <person name="Tashiro H."/>
            <person name="Tanigami A."/>
            <person name="Fujiwara T."/>
            <person name="Ono T."/>
            <person name="Yamada K."/>
            <person name="Fujii Y."/>
            <person name="Ozaki K."/>
            <person name="Hirao M."/>
            <person name="Ohmori Y."/>
            <person name="Kawabata A."/>
            <person name="Hikiji T."/>
            <person name="Kobatake N."/>
            <person name="Inagaki H."/>
            <person name="Ikema Y."/>
            <person name="Okamoto S."/>
            <person name="Okitani R."/>
            <person name="Kawakami T."/>
            <person name="Noguchi S."/>
            <person name="Itoh T."/>
            <person name="Shigeta K."/>
            <person name="Senba T."/>
            <person name="Matsumura K."/>
            <person name="Nakajima Y."/>
            <person name="Mizuno T."/>
            <person name="Morinaga M."/>
            <person name="Sasaki M."/>
            <person name="Togashi T."/>
            <person name="Oyama M."/>
            <person name="Hata H."/>
            <person name="Watanabe M."/>
            <person name="Komatsu T."/>
            <person name="Mizushima-Sugano J."/>
            <person name="Satoh T."/>
            <person name="Shirai Y."/>
            <person name="Takahashi Y."/>
            <person name="Nakagawa K."/>
            <person name="Okumura K."/>
            <person name="Nagase T."/>
            <person name="Nomura N."/>
            <person name="Kikuchi H."/>
            <person name="Masuho Y."/>
            <person name="Yamashita R."/>
            <person name="Nakai K."/>
            <person name="Yada T."/>
            <person name="Nakamura Y."/>
            <person name="Ohara O."/>
            <person name="Isogai T."/>
            <person name="Sugano S."/>
        </authorList>
    </citation>
    <scope>NUCLEOTIDE SEQUENCE [LARGE SCALE MRNA] (ISOFORMS 2 AND 3)</scope>
    <source>
        <tissue>Retinoblastoma</tissue>
        <tissue>Thyroid</tissue>
    </source>
</reference>
<reference key="6">
    <citation type="journal article" date="2006" name="Nature">
        <title>The DNA sequence and biological annotation of human chromosome 1.</title>
        <authorList>
            <person name="Gregory S.G."/>
            <person name="Barlow K.F."/>
            <person name="McLay K.E."/>
            <person name="Kaul R."/>
            <person name="Swarbreck D."/>
            <person name="Dunham A."/>
            <person name="Scott C.E."/>
            <person name="Howe K.L."/>
            <person name="Woodfine K."/>
            <person name="Spencer C.C.A."/>
            <person name="Jones M.C."/>
            <person name="Gillson C."/>
            <person name="Searle S."/>
            <person name="Zhou Y."/>
            <person name="Kokocinski F."/>
            <person name="McDonald L."/>
            <person name="Evans R."/>
            <person name="Phillips K."/>
            <person name="Atkinson A."/>
            <person name="Cooper R."/>
            <person name="Jones C."/>
            <person name="Hall R.E."/>
            <person name="Andrews T.D."/>
            <person name="Lloyd C."/>
            <person name="Ainscough R."/>
            <person name="Almeida J.P."/>
            <person name="Ambrose K.D."/>
            <person name="Anderson F."/>
            <person name="Andrew R.W."/>
            <person name="Ashwell R.I.S."/>
            <person name="Aubin K."/>
            <person name="Babbage A.K."/>
            <person name="Bagguley C.L."/>
            <person name="Bailey J."/>
            <person name="Beasley H."/>
            <person name="Bethel G."/>
            <person name="Bird C.P."/>
            <person name="Bray-Allen S."/>
            <person name="Brown J.Y."/>
            <person name="Brown A.J."/>
            <person name="Buckley D."/>
            <person name="Burton J."/>
            <person name="Bye J."/>
            <person name="Carder C."/>
            <person name="Chapman J.C."/>
            <person name="Clark S.Y."/>
            <person name="Clarke G."/>
            <person name="Clee C."/>
            <person name="Cobley V."/>
            <person name="Collier R.E."/>
            <person name="Corby N."/>
            <person name="Coville G.J."/>
            <person name="Davies J."/>
            <person name="Deadman R."/>
            <person name="Dunn M."/>
            <person name="Earthrowl M."/>
            <person name="Ellington A.G."/>
            <person name="Errington H."/>
            <person name="Frankish A."/>
            <person name="Frankland J."/>
            <person name="French L."/>
            <person name="Garner P."/>
            <person name="Garnett J."/>
            <person name="Gay L."/>
            <person name="Ghori M.R.J."/>
            <person name="Gibson R."/>
            <person name="Gilby L.M."/>
            <person name="Gillett W."/>
            <person name="Glithero R.J."/>
            <person name="Grafham D.V."/>
            <person name="Griffiths C."/>
            <person name="Griffiths-Jones S."/>
            <person name="Grocock R."/>
            <person name="Hammond S."/>
            <person name="Harrison E.S.I."/>
            <person name="Hart E."/>
            <person name="Haugen E."/>
            <person name="Heath P.D."/>
            <person name="Holmes S."/>
            <person name="Holt K."/>
            <person name="Howden P.J."/>
            <person name="Hunt A.R."/>
            <person name="Hunt S.E."/>
            <person name="Hunter G."/>
            <person name="Isherwood J."/>
            <person name="James R."/>
            <person name="Johnson C."/>
            <person name="Johnson D."/>
            <person name="Joy A."/>
            <person name="Kay M."/>
            <person name="Kershaw J.K."/>
            <person name="Kibukawa M."/>
            <person name="Kimberley A.M."/>
            <person name="King A."/>
            <person name="Knights A.J."/>
            <person name="Lad H."/>
            <person name="Laird G."/>
            <person name="Lawlor S."/>
            <person name="Leongamornlert D.A."/>
            <person name="Lloyd D.M."/>
            <person name="Loveland J."/>
            <person name="Lovell J."/>
            <person name="Lush M.J."/>
            <person name="Lyne R."/>
            <person name="Martin S."/>
            <person name="Mashreghi-Mohammadi M."/>
            <person name="Matthews L."/>
            <person name="Matthews N.S.W."/>
            <person name="McLaren S."/>
            <person name="Milne S."/>
            <person name="Mistry S."/>
            <person name="Moore M.J.F."/>
            <person name="Nickerson T."/>
            <person name="O'Dell C.N."/>
            <person name="Oliver K."/>
            <person name="Palmeiri A."/>
            <person name="Palmer S.A."/>
            <person name="Parker A."/>
            <person name="Patel D."/>
            <person name="Pearce A.V."/>
            <person name="Peck A.I."/>
            <person name="Pelan S."/>
            <person name="Phelps K."/>
            <person name="Phillimore B.J."/>
            <person name="Plumb R."/>
            <person name="Rajan J."/>
            <person name="Raymond C."/>
            <person name="Rouse G."/>
            <person name="Saenphimmachak C."/>
            <person name="Sehra H.K."/>
            <person name="Sheridan E."/>
            <person name="Shownkeen R."/>
            <person name="Sims S."/>
            <person name="Skuce C.D."/>
            <person name="Smith M."/>
            <person name="Steward C."/>
            <person name="Subramanian S."/>
            <person name="Sycamore N."/>
            <person name="Tracey A."/>
            <person name="Tromans A."/>
            <person name="Van Helmond Z."/>
            <person name="Wall M."/>
            <person name="Wallis J.M."/>
            <person name="White S."/>
            <person name="Whitehead S.L."/>
            <person name="Wilkinson J.E."/>
            <person name="Willey D.L."/>
            <person name="Williams H."/>
            <person name="Wilming L."/>
            <person name="Wray P.W."/>
            <person name="Wu Z."/>
            <person name="Coulson A."/>
            <person name="Vaudin M."/>
            <person name="Sulston J.E."/>
            <person name="Durbin R.M."/>
            <person name="Hubbard T."/>
            <person name="Wooster R."/>
            <person name="Dunham I."/>
            <person name="Carter N.P."/>
            <person name="McVean G."/>
            <person name="Ross M.T."/>
            <person name="Harrow J."/>
            <person name="Olson M.V."/>
            <person name="Beck S."/>
            <person name="Rogers J."/>
            <person name="Bentley D.R."/>
        </authorList>
    </citation>
    <scope>NUCLEOTIDE SEQUENCE [LARGE SCALE GENOMIC DNA]</scope>
</reference>
<reference key="7">
    <citation type="submission" date="2005-09" db="EMBL/GenBank/DDBJ databases">
        <authorList>
            <person name="Mural R.J."/>
            <person name="Istrail S."/>
            <person name="Sutton G.G."/>
            <person name="Florea L."/>
            <person name="Halpern A.L."/>
            <person name="Mobarry C.M."/>
            <person name="Lippert R."/>
            <person name="Walenz B."/>
            <person name="Shatkay H."/>
            <person name="Dew I."/>
            <person name="Miller J.R."/>
            <person name="Flanigan M.J."/>
            <person name="Edwards N.J."/>
            <person name="Bolanos R."/>
            <person name="Fasulo D."/>
            <person name="Halldorsson B.V."/>
            <person name="Hannenhalli S."/>
            <person name="Turner R."/>
            <person name="Yooseph S."/>
            <person name="Lu F."/>
            <person name="Nusskern D.R."/>
            <person name="Shue B.C."/>
            <person name="Zheng X.H."/>
            <person name="Zhong F."/>
            <person name="Delcher A.L."/>
            <person name="Huson D.H."/>
            <person name="Kravitz S.A."/>
            <person name="Mouchard L."/>
            <person name="Reinert K."/>
            <person name="Remington K.A."/>
            <person name="Clark A.G."/>
            <person name="Waterman M.S."/>
            <person name="Eichler E.E."/>
            <person name="Adams M.D."/>
            <person name="Hunkapiller M.W."/>
            <person name="Myers E.W."/>
            <person name="Venter J.C."/>
        </authorList>
    </citation>
    <scope>NUCLEOTIDE SEQUENCE [LARGE SCALE GENOMIC DNA]</scope>
</reference>
<reference key="8">
    <citation type="journal article" date="2004" name="Genome Res.">
        <title>The status, quality, and expansion of the NIH full-length cDNA project: the Mammalian Gene Collection (MGC).</title>
        <authorList>
            <consortium name="The MGC Project Team"/>
        </authorList>
    </citation>
    <scope>NUCLEOTIDE SEQUENCE [LARGE SCALE MRNA] (ISOFORMS 1 AND 2)</scope>
    <source>
        <tissue>Adrenal gland</tissue>
        <tissue>Brain</tissue>
        <tissue>Cervix</tissue>
        <tissue>Eye</tissue>
        <tissue>Glial tumor</tissue>
        <tissue>Lung</tissue>
    </source>
</reference>
<reference key="9">
    <citation type="journal article" date="2002" name="Dev. Cell">
        <title>aph-1 and pen-2 are required for Notch pathway signaling, gamma-secretase cleavage of betaAPP, and presenilin protein accumulation.</title>
        <authorList>
            <person name="Francis R."/>
            <person name="McGrath G."/>
            <person name="Zhang J."/>
            <person name="Ruddy D.A."/>
            <person name="Sym M."/>
            <person name="Apfeld J."/>
            <person name="Nicoll M."/>
            <person name="Maxwell M."/>
            <person name="Hai B."/>
            <person name="Ellis M.C."/>
            <person name="Parks A.L."/>
            <person name="Xu W."/>
            <person name="Li J."/>
            <person name="Gurney M."/>
            <person name="Myers R.L."/>
            <person name="Himes C.S."/>
            <person name="Hiebsch R."/>
            <person name="Ruble C."/>
            <person name="Nye J.S."/>
            <person name="Curtis D."/>
        </authorList>
    </citation>
    <scope>TISSUE SPECIFICITY</scope>
</reference>
<reference key="10">
    <citation type="journal article" date="2003" name="J. Biol. Chem.">
        <title>PEN-2 and APH-1 coordinately regulate proteolytic processing of presenilin 1.</title>
        <authorList>
            <person name="Luo W.-J."/>
            <person name="Wang H."/>
            <person name="Li H."/>
            <person name="Kim B.S."/>
            <person name="Shah S."/>
            <person name="Lee H.-J."/>
            <person name="Thinakaran G."/>
            <person name="Kim T.-W."/>
            <person name="Yu G."/>
            <person name="Xu H."/>
        </authorList>
    </citation>
    <scope>SUBCELLULAR LOCATION</scope>
    <scope>FUNCTION</scope>
</reference>
<reference key="11">
    <citation type="journal article" date="2003" name="J. Biol. Chem.">
        <title>APH-1 interacts with mature and immature forms of presenilins and nicastrin and may play a role in maturation of presenilin.nicastrin complexes.</title>
        <authorList>
            <person name="Gu Y."/>
            <person name="Chen F."/>
            <person name="Sanjo N."/>
            <person name="Kawarai T."/>
            <person name="Hasegawa H."/>
            <person name="Duthie M."/>
            <person name="Li W."/>
            <person name="Ruan X."/>
            <person name="Luthra A."/>
            <person name="Mount H.T.J."/>
            <person name="Tandon A."/>
            <person name="Fraser P.E."/>
            <person name="St George-Hyslop P.H."/>
        </authorList>
    </citation>
    <scope>SUBCELLULAR LOCATION</scope>
    <scope>INTERACTION WITH PSEN1</scope>
</reference>
<reference key="12">
    <citation type="journal article" date="2003" name="Biochem. Biophys. Res. Commun.">
        <title>APH1, PEN2, and nicastrin increase Abeta levels and gamma-secretase activity.</title>
        <authorList>
            <person name="Marlow L."/>
            <person name="Canet R.M."/>
            <person name="Haugabook S.J."/>
            <person name="Hardy J.A."/>
            <person name="Lahiri D.K."/>
            <person name="Sambamurti K."/>
        </authorList>
    </citation>
    <scope>FUNCTION IN THE GAMMA-SECRETASE COMPLEX</scope>
</reference>
<reference key="13">
    <citation type="journal article" date="2003" name="Proc. Natl. Acad. Sci. U.S.A.">
        <title>Gamma-secretase is a membrane protein complex comprised of presenilin, nicastrin, Aph-1, and Pen-2.</title>
        <authorList>
            <person name="Kimberly W.T."/>
            <person name="LaVoie M.J."/>
            <person name="Ostaszewski B.L."/>
            <person name="Ye W."/>
            <person name="Wolfe M.S."/>
            <person name="Selkoe D.J."/>
        </authorList>
    </citation>
    <scope>COMPONENT OF A GAMMA-SECRETASE COMPLEX WITH PEN2; PSEN1/PSEN2 AND NCSTN</scope>
    <scope>SUBUNIT</scope>
</reference>
<reference key="14">
    <citation type="journal article" date="2003" name="Nat. Cell Biol.">
        <title>Reconstitution of gamma-secretase activity.</title>
        <authorList>
            <person name="Edbauer D."/>
            <person name="Winkler E."/>
            <person name="Regula J.T."/>
            <person name="Pesold B."/>
            <person name="Steiner H."/>
            <person name="Haass C."/>
        </authorList>
    </citation>
    <scope>ENZYME ACTIVITY OF A GAMMA-SECRETASE COMPLEX</scope>
    <scope>FUNCTION</scope>
</reference>
<reference key="15">
    <citation type="journal article" date="2004" name="J. Biol. Chem.">
        <title>Membrane topology and nicastrin-enhanced endoproteolysis of APH-1, a component of the gamma-secretase complex.</title>
        <authorList>
            <person name="Fortna R.R."/>
            <person name="Crystal A.S."/>
            <person name="Morais V.A."/>
            <person name="Pijak D.S."/>
            <person name="Lee V.M."/>
            <person name="Doms R.W."/>
        </authorList>
    </citation>
    <scope>SUBCELLULAR LOCATION</scope>
    <scope>MEMBRANE TOPOLOGY</scope>
</reference>
<reference key="16">
    <citation type="journal article" date="2009" name="J. Biol. Chem.">
        <title>APH1 polar transmembrane residues regulate the assembly and activity of presenilin complexes.</title>
        <authorList>
            <person name="Pardossi-Piquard R."/>
            <person name="Yang S.P."/>
            <person name="Kanemoto S."/>
            <person name="Gu Y."/>
            <person name="Chen F."/>
            <person name="Boehm C."/>
            <person name="Sevalle J."/>
            <person name="Li T."/>
            <person name="Wong P.C."/>
            <person name="Checler F."/>
            <person name="Schmitt-Ulms G."/>
            <person name="St George-Hyslop P."/>
            <person name="Fraser P.E."/>
        </authorList>
    </citation>
    <scope>FUNCTION</scope>
    <scope>SUBUNIT</scope>
    <scope>SUBCELLULAR LOCATION</scope>
    <scope>MUTAGENESIS OF HIS-171 AND HIS-197</scope>
</reference>
<reference key="17">
    <citation type="journal article" date="2014" name="Nature">
        <title>Three-dimensional structure of human gamma-secretase.</title>
        <authorList>
            <person name="Lu P."/>
            <person name="Bai X.C."/>
            <person name="Ma D."/>
            <person name="Xie T."/>
            <person name="Yan C."/>
            <person name="Sun L."/>
            <person name="Yang G."/>
            <person name="Zhao Y."/>
            <person name="Zhou R."/>
            <person name="Scheres S.H."/>
            <person name="Shi Y."/>
        </authorList>
    </citation>
    <scope>STRUCTURE BY ELECTRON MICROSCOPY (4.5 ANGSTROMS)</scope>
    <scope>FUNCTION</scope>
    <scope>SUBCELLULAR LOCATION</scope>
    <scope>TOPOLOGY</scope>
    <scope>SUBUNIT</scope>
</reference>
<reference key="18">
    <citation type="journal article" date="2015" name="Elife">
        <title>Sampling the conformational space of the catalytic subunit of human gamma-secretase.</title>
        <authorList>
            <person name="Bai X.C."/>
            <person name="Rajendra E."/>
            <person name="Yang G."/>
            <person name="Shi Y."/>
            <person name="Scheres S.H."/>
        </authorList>
    </citation>
    <scope>STRUCTURE BY ELECTRON MICROSCOPY (4.00 ANGSTROMS)</scope>
    <scope>SUBCELLULAR LOCATION</scope>
    <scope>TISSUE SPECIFICITY</scope>
    <scope>SUBUNIT</scope>
</reference>
<reference key="19">
    <citation type="journal article" date="2015" name="Nature">
        <title>An atomic structure of human gamma-secretase.</title>
        <authorList>
            <person name="Bai X.C."/>
            <person name="Yan C."/>
            <person name="Yang G."/>
            <person name="Lu P."/>
            <person name="Ma D."/>
            <person name="Sun L."/>
            <person name="Zhou R."/>
            <person name="Scheres S.H."/>
            <person name="Shi Y."/>
        </authorList>
    </citation>
    <scope>STRUCTURE BY ELECTRON MICROSCOPY (3.40 ANGSTROMS)</scope>
    <scope>FUNCTION</scope>
    <scope>SUBCELLULAR LOCATION</scope>
    <scope>TOPOLOGY</scope>
    <scope>SUBUNIT</scope>
</reference>
<reference key="20">
    <citation type="journal article" date="2019" name="Nature">
        <title>Structural basis of Notch recognition by human gamma-secretase.</title>
        <authorList>
            <person name="Yang G."/>
            <person name="Zhou R."/>
            <person name="Zhou Q."/>
            <person name="Guo X."/>
            <person name="Yan C."/>
            <person name="Ke M."/>
            <person name="Lei J."/>
            <person name="Shi Y."/>
        </authorList>
    </citation>
    <scope>STRUCTURE BY ELECTRON MICROSCOPY (2.70 ANGSTROMS) IN COMPLEX WITH NOTCH1; PSENEN; PSEN1 AND NCSTN</scope>
    <scope>FUNCTION</scope>
    <scope>SUBUNIT</scope>
    <scope>TOPOLOGY</scope>
</reference>
<reference key="21">
    <citation type="journal article" date="2019" name="Science">
        <title>Recognition of the amyloid precursor protein by human gamma-secretase.</title>
        <authorList>
            <person name="Zhou R."/>
            <person name="Yang G."/>
            <person name="Guo X."/>
            <person name="Zhou Q."/>
            <person name="Lei J."/>
            <person name="Shi Y."/>
        </authorList>
    </citation>
    <scope>STRUCTURE BY ELECTRON MICROSCOPY (2.60 ANGSTROMS) IN COMPLEX WITH APP CHAIN C83; PSENEN; PSEN1 AND NCSTN</scope>
    <scope>FUNCTION</scope>
    <scope>SUBUNIT</scope>
    <scope>TOPOLOGY</scope>
</reference>
<keyword id="KW-0002">3D-structure</keyword>
<keyword id="KW-0025">Alternative splicing</keyword>
<keyword id="KW-0256">Endoplasmic reticulum</keyword>
<keyword id="KW-0333">Golgi apparatus</keyword>
<keyword id="KW-0472">Membrane</keyword>
<keyword id="KW-0914">Notch signaling pathway</keyword>
<keyword id="KW-1267">Proteomics identification</keyword>
<keyword id="KW-1185">Reference proteome</keyword>
<keyword id="KW-0812">Transmembrane</keyword>
<keyword id="KW-1133">Transmembrane helix</keyword>
<feature type="chain" id="PRO_0000221050" description="Gamma-secretase subunit APH-1A">
    <location>
        <begin position="1"/>
        <end position="265"/>
    </location>
</feature>
<feature type="topological domain" description="Lumenal" evidence="10 20">
    <location>
        <begin position="1"/>
        <end position="2"/>
    </location>
</feature>
<feature type="transmembrane region" description="Helical; Name=1" evidence="10">
    <location>
        <begin position="3"/>
        <end position="23"/>
    </location>
</feature>
<feature type="topological domain" description="Cytoplasmic" evidence="10 20">
    <location>
        <begin position="24"/>
        <end position="31"/>
    </location>
</feature>
<feature type="transmembrane region" description="Helical; Name=2" evidence="10">
    <location>
        <begin position="32"/>
        <end position="52"/>
    </location>
</feature>
<feature type="topological domain" description="Lumenal" evidence="10 20">
    <location>
        <begin position="53"/>
        <end position="68"/>
    </location>
</feature>
<feature type="transmembrane region" description="Helical; Name=3" evidence="10">
    <location>
        <begin position="69"/>
        <end position="89"/>
    </location>
</feature>
<feature type="topological domain" description="Cytoplasmic" evidence="10 20">
    <location>
        <begin position="90"/>
        <end position="118"/>
    </location>
</feature>
<feature type="transmembrane region" description="Helical; Name=4" evidence="10">
    <location>
        <begin position="119"/>
        <end position="139"/>
    </location>
</feature>
<feature type="topological domain" description="Lumenal" evidence="10 20">
    <location>
        <begin position="140"/>
        <end position="158"/>
    </location>
</feature>
<feature type="transmembrane region" description="Helical; Name=5" evidence="10">
    <location>
        <begin position="159"/>
        <end position="179"/>
    </location>
</feature>
<feature type="topological domain" description="Cytoplasmic" evidence="10 20">
    <location>
        <begin position="180"/>
        <end position="186"/>
    </location>
</feature>
<feature type="transmembrane region" description="Helical; Name=6" evidence="10">
    <location>
        <begin position="187"/>
        <end position="207"/>
    </location>
</feature>
<feature type="topological domain" description="Lumenal" evidence="10 20">
    <location>
        <begin position="208"/>
        <end position="213"/>
    </location>
</feature>
<feature type="transmembrane region" description="Helical; Name=7" evidence="10">
    <location>
        <begin position="214"/>
        <end position="234"/>
    </location>
</feature>
<feature type="topological domain" description="Cytoplasmic" evidence="10 20">
    <location>
        <begin position="235"/>
        <end position="265"/>
    </location>
</feature>
<feature type="splice variant" id="VSP_045424" description="In isoform 3." evidence="16">
    <original>AFFWLVSLLLASVVWFILVHVTDRSDARLQYGLLIFGAAVSVLLQEVFRFAYYKLLKKADEGLASLSEDGRSPISIRQMAYV</original>
    <variation>RCSALPTTSCLI</variation>
    <location>
        <begin position="39"/>
        <end position="120"/>
    </location>
</feature>
<feature type="splice variant" id="VSP_008355" description="In isoform 2." evidence="14 15 16 17 18">
    <original>RR</original>
    <variation>KD</variation>
    <location>
        <begin position="246"/>
        <end position="247"/>
    </location>
</feature>
<feature type="splice variant" id="VSP_008356" description="In isoform 2." evidence="14 15 16 17 18">
    <location>
        <begin position="248"/>
        <end position="265"/>
    </location>
</feature>
<feature type="mutagenesis site" description="Impaired gamma-secretease assembly and reduced proteolytic activity of the gamma-secretase complex." evidence="8">
    <original>H</original>
    <variation>A</variation>
    <location>
        <position position="171"/>
    </location>
</feature>
<feature type="mutagenesis site" description="Impaired gamma-secretease assembly and reduced proteolytic activity of the gamma-secretase complex." evidence="8">
    <original>H</original>
    <variation>A</variation>
    <location>
        <position position="197"/>
    </location>
</feature>
<feature type="sequence conflict" description="In Ref. 8; AAH01230." evidence="19" ref="8">
    <original>L</original>
    <variation>I</variation>
    <location>
        <position position="236"/>
    </location>
</feature>
<feature type="helix" evidence="22">
    <location>
        <begin position="3"/>
        <end position="13"/>
    </location>
</feature>
<feature type="helix" evidence="22">
    <location>
        <begin position="15"/>
        <end position="24"/>
    </location>
</feature>
<feature type="turn" evidence="22">
    <location>
        <begin position="25"/>
        <end position="27"/>
    </location>
</feature>
<feature type="helix" evidence="22">
    <location>
        <begin position="29"/>
        <end position="59"/>
    </location>
</feature>
<feature type="turn" evidence="22">
    <location>
        <begin position="60"/>
        <end position="62"/>
    </location>
</feature>
<feature type="helix" evidence="22">
    <location>
        <begin position="66"/>
        <end position="102"/>
    </location>
</feature>
<feature type="turn" evidence="22">
    <location>
        <begin position="103"/>
        <end position="105"/>
    </location>
</feature>
<feature type="strand" evidence="22">
    <location>
        <begin position="106"/>
        <end position="109"/>
    </location>
</feature>
<feature type="helix" evidence="22">
    <location>
        <begin position="114"/>
        <end position="140"/>
    </location>
</feature>
<feature type="strand" evidence="21">
    <location>
        <begin position="142"/>
        <end position="144"/>
    </location>
</feature>
<feature type="strand" evidence="23">
    <location>
        <begin position="149"/>
        <end position="151"/>
    </location>
</feature>
<feature type="helix" evidence="22">
    <location>
        <begin position="156"/>
        <end position="184"/>
    </location>
</feature>
<feature type="helix" evidence="22">
    <location>
        <begin position="187"/>
        <end position="203"/>
    </location>
</feature>
<feature type="helix" evidence="22">
    <location>
        <begin position="204"/>
        <end position="206"/>
    </location>
</feature>
<feature type="turn" evidence="22">
    <location>
        <begin position="211"/>
        <end position="213"/>
    </location>
</feature>
<feature type="helix" evidence="22">
    <location>
        <begin position="215"/>
        <end position="231"/>
    </location>
</feature>
<feature type="helix" evidence="22">
    <location>
        <begin position="236"/>
        <end position="240"/>
    </location>
</feature>
<feature type="turn" evidence="22">
    <location>
        <begin position="241"/>
        <end position="243"/>
    </location>
</feature>
<organism>
    <name type="scientific">Homo sapiens</name>
    <name type="common">Human</name>
    <dbReference type="NCBI Taxonomy" id="9606"/>
    <lineage>
        <taxon>Eukaryota</taxon>
        <taxon>Metazoa</taxon>
        <taxon>Chordata</taxon>
        <taxon>Craniata</taxon>
        <taxon>Vertebrata</taxon>
        <taxon>Euteleostomi</taxon>
        <taxon>Mammalia</taxon>
        <taxon>Eutheria</taxon>
        <taxon>Euarchontoglires</taxon>
        <taxon>Primates</taxon>
        <taxon>Haplorrhini</taxon>
        <taxon>Catarrhini</taxon>
        <taxon>Hominidae</taxon>
        <taxon>Homo</taxon>
    </lineage>
</organism>
<dbReference type="EMBL" id="AF508787">
    <property type="protein sequence ID" value="AAN63816.1"/>
    <property type="status" value="ALT_FRAME"/>
    <property type="molecule type" value="mRNA"/>
</dbReference>
<dbReference type="EMBL" id="AY113698">
    <property type="protein sequence ID" value="AAM61955.1"/>
    <property type="molecule type" value="mRNA"/>
</dbReference>
<dbReference type="EMBL" id="AY113699">
    <property type="protein sequence ID" value="AAM61956.1"/>
    <property type="molecule type" value="mRNA"/>
</dbReference>
<dbReference type="EMBL" id="AF151835">
    <property type="protein sequence ID" value="AAD34072.1"/>
    <property type="status" value="ALT_FRAME"/>
    <property type="molecule type" value="mRNA"/>
</dbReference>
<dbReference type="EMBL" id="AY358951">
    <property type="protein sequence ID" value="AAQ89310.1"/>
    <property type="molecule type" value="mRNA"/>
</dbReference>
<dbReference type="EMBL" id="AK027879">
    <property type="protein sequence ID" value="BAG51389.1"/>
    <property type="molecule type" value="mRNA"/>
</dbReference>
<dbReference type="EMBL" id="AK075295">
    <property type="protein sequence ID" value="BAC11529.1"/>
    <property type="molecule type" value="mRNA"/>
</dbReference>
<dbReference type="EMBL" id="AK298832">
    <property type="protein sequence ID" value="BAG60962.1"/>
    <property type="molecule type" value="mRNA"/>
</dbReference>
<dbReference type="EMBL" id="AL138795">
    <property type="protein sequence ID" value="CAI22811.1"/>
    <property type="molecule type" value="Genomic_DNA"/>
</dbReference>
<dbReference type="EMBL" id="AL138795">
    <property type="protein sequence ID" value="CAI22812.1"/>
    <property type="molecule type" value="Genomic_DNA"/>
</dbReference>
<dbReference type="EMBL" id="CH471121">
    <property type="protein sequence ID" value="EAW53565.1"/>
    <property type="molecule type" value="Genomic_DNA"/>
</dbReference>
<dbReference type="EMBL" id="CH471121">
    <property type="protein sequence ID" value="EAW53566.1"/>
    <property type="molecule type" value="Genomic_DNA"/>
</dbReference>
<dbReference type="EMBL" id="CH471121">
    <property type="protein sequence ID" value="EAW53567.1"/>
    <property type="molecule type" value="Genomic_DNA"/>
</dbReference>
<dbReference type="EMBL" id="BC001230">
    <property type="protein sequence ID" value="AAH01230.1"/>
    <property type="molecule type" value="mRNA"/>
</dbReference>
<dbReference type="EMBL" id="BC008732">
    <property type="protein sequence ID" value="AAH08732.1"/>
    <property type="molecule type" value="mRNA"/>
</dbReference>
<dbReference type="EMBL" id="BC009501">
    <property type="protein sequence ID" value="AAH09501.1"/>
    <property type="molecule type" value="mRNA"/>
</dbReference>
<dbReference type="EMBL" id="BC015568">
    <property type="protein sequence ID" value="AAH15568.1"/>
    <property type="molecule type" value="mRNA"/>
</dbReference>
<dbReference type="EMBL" id="BC017699">
    <property type="protein sequence ID" value="AAH17699.1"/>
    <property type="molecule type" value="mRNA"/>
</dbReference>
<dbReference type="EMBL" id="BC020590">
    <property type="protein sequence ID" value="AAH20590.1"/>
    <property type="molecule type" value="mRNA"/>
</dbReference>
<dbReference type="CCDS" id="CCDS41390.1">
    <molecule id="Q96BI3-1"/>
</dbReference>
<dbReference type="CCDS" id="CCDS41391.1">
    <molecule id="Q96BI3-2"/>
</dbReference>
<dbReference type="CCDS" id="CCDS58025.1">
    <molecule id="Q96BI3-3"/>
</dbReference>
<dbReference type="RefSeq" id="NP_001071096.1">
    <molecule id="Q96BI3-1"/>
    <property type="nucleotide sequence ID" value="NM_001077628.3"/>
</dbReference>
<dbReference type="RefSeq" id="NP_001230700.1">
    <property type="nucleotide sequence ID" value="NM_001243771.1"/>
</dbReference>
<dbReference type="RefSeq" id="NP_001230701.1">
    <molecule id="Q96BI3-3"/>
    <property type="nucleotide sequence ID" value="NM_001243772.2"/>
</dbReference>
<dbReference type="RefSeq" id="NP_057106.2">
    <molecule id="Q96BI3-2"/>
    <property type="nucleotide sequence ID" value="NM_016022.4"/>
</dbReference>
<dbReference type="PDB" id="5A63">
    <property type="method" value="EM"/>
    <property type="resolution" value="3.40 A"/>
    <property type="chains" value="C=1-265"/>
</dbReference>
<dbReference type="PDB" id="5FN2">
    <property type="method" value="EM"/>
    <property type="resolution" value="4.20 A"/>
    <property type="chains" value="C=1-265"/>
</dbReference>
<dbReference type="PDB" id="5FN3">
    <property type="method" value="EM"/>
    <property type="resolution" value="4.10 A"/>
    <property type="chains" value="C=1-265"/>
</dbReference>
<dbReference type="PDB" id="5FN4">
    <property type="method" value="EM"/>
    <property type="resolution" value="4.00 A"/>
    <property type="chains" value="C=1-265"/>
</dbReference>
<dbReference type="PDB" id="5FN5">
    <property type="method" value="EM"/>
    <property type="resolution" value="4.30 A"/>
    <property type="chains" value="C=1-265"/>
</dbReference>
<dbReference type="PDB" id="6IDF">
    <property type="method" value="EM"/>
    <property type="resolution" value="2.70 A"/>
    <property type="chains" value="C=1-265"/>
</dbReference>
<dbReference type="PDB" id="6IYC">
    <property type="method" value="EM"/>
    <property type="resolution" value="2.60 A"/>
    <property type="chains" value="C=1-265"/>
</dbReference>
<dbReference type="PDB" id="6LQG">
    <property type="method" value="EM"/>
    <property type="resolution" value="3.10 A"/>
    <property type="chains" value="C=1-265"/>
</dbReference>
<dbReference type="PDB" id="6LR4">
    <property type="method" value="EM"/>
    <property type="resolution" value="3.00 A"/>
    <property type="chains" value="C=1-265"/>
</dbReference>
<dbReference type="PDB" id="7C9I">
    <property type="method" value="EM"/>
    <property type="resolution" value="3.10 A"/>
    <property type="chains" value="C=1-265"/>
</dbReference>
<dbReference type="PDB" id="7D8X">
    <property type="method" value="EM"/>
    <property type="resolution" value="2.60 A"/>
    <property type="chains" value="C=1-265"/>
</dbReference>
<dbReference type="PDB" id="7Y5T">
    <property type="method" value="EM"/>
    <property type="resolution" value="2.90 A"/>
    <property type="chains" value="C=1-265"/>
</dbReference>
<dbReference type="PDB" id="7Y5X">
    <property type="method" value="EM"/>
    <property type="resolution" value="3.00 A"/>
    <property type="chains" value="C=1-265"/>
</dbReference>
<dbReference type="PDB" id="7Y5Z">
    <property type="method" value="EM"/>
    <property type="resolution" value="3.40 A"/>
    <property type="chains" value="C=1-265"/>
</dbReference>
<dbReference type="PDB" id="8IM7">
    <property type="method" value="EM"/>
    <property type="resolution" value="3.40 A"/>
    <property type="chains" value="C=1-265"/>
</dbReference>
<dbReference type="PDB" id="8K8E">
    <property type="method" value="EM"/>
    <property type="resolution" value="2.60 A"/>
    <property type="chains" value="C=1-265"/>
</dbReference>
<dbReference type="PDB" id="8KCO">
    <property type="method" value="EM"/>
    <property type="resolution" value="2.80 A"/>
    <property type="chains" value="C=1-265"/>
</dbReference>
<dbReference type="PDB" id="8KCP">
    <property type="method" value="EM"/>
    <property type="resolution" value="3.00 A"/>
    <property type="chains" value="C=1-265"/>
</dbReference>
<dbReference type="PDB" id="8KCS">
    <property type="method" value="EM"/>
    <property type="resolution" value="2.40 A"/>
    <property type="chains" value="C=1-265"/>
</dbReference>
<dbReference type="PDB" id="8KCT">
    <property type="method" value="EM"/>
    <property type="resolution" value="2.60 A"/>
    <property type="chains" value="C=1-265"/>
</dbReference>
<dbReference type="PDB" id="8KCU">
    <property type="method" value="EM"/>
    <property type="resolution" value="2.70 A"/>
    <property type="chains" value="C=1-265"/>
</dbReference>
<dbReference type="PDB" id="8X52">
    <property type="method" value="EM"/>
    <property type="resolution" value="2.90 A"/>
    <property type="chains" value="C=1-265"/>
</dbReference>
<dbReference type="PDB" id="8X53">
    <property type="method" value="EM"/>
    <property type="resolution" value="3.00 A"/>
    <property type="chains" value="C=1-265"/>
</dbReference>
<dbReference type="PDB" id="8X54">
    <property type="method" value="EM"/>
    <property type="resolution" value="2.90 A"/>
    <property type="chains" value="C=1-265"/>
</dbReference>
<dbReference type="PDBsum" id="5A63"/>
<dbReference type="PDBsum" id="5FN2"/>
<dbReference type="PDBsum" id="5FN3"/>
<dbReference type="PDBsum" id="5FN4"/>
<dbReference type="PDBsum" id="5FN5"/>
<dbReference type="PDBsum" id="6IDF"/>
<dbReference type="PDBsum" id="6IYC"/>
<dbReference type="PDBsum" id="6LQG"/>
<dbReference type="PDBsum" id="6LR4"/>
<dbReference type="PDBsum" id="7C9I"/>
<dbReference type="PDBsum" id="7D8X"/>
<dbReference type="PDBsum" id="7Y5T"/>
<dbReference type="PDBsum" id="7Y5X"/>
<dbReference type="PDBsum" id="7Y5Z"/>
<dbReference type="PDBsum" id="8IM7"/>
<dbReference type="PDBsum" id="8K8E"/>
<dbReference type="PDBsum" id="8KCO"/>
<dbReference type="PDBsum" id="8KCP"/>
<dbReference type="PDBsum" id="8KCS"/>
<dbReference type="PDBsum" id="8KCT"/>
<dbReference type="PDBsum" id="8KCU"/>
<dbReference type="PDBsum" id="8X52"/>
<dbReference type="PDBsum" id="8X53"/>
<dbReference type="PDBsum" id="8X54"/>
<dbReference type="EMDB" id="EMD-0944"/>
<dbReference type="EMDB" id="EMD-0957"/>
<dbReference type="EMDB" id="EMD-2477"/>
<dbReference type="EMDB" id="EMD-2478"/>
<dbReference type="EMDB" id="EMD-30312"/>
<dbReference type="EMDB" id="EMD-3061"/>
<dbReference type="EMDB" id="EMD-30614"/>
<dbReference type="EMDB" id="EMD-3237"/>
<dbReference type="EMDB" id="EMD-3238"/>
<dbReference type="EMDB" id="EMD-3239"/>
<dbReference type="EMDB" id="EMD-3240"/>
<dbReference type="EMDB" id="EMD-33624"/>
<dbReference type="EMDB" id="EMD-33628"/>
<dbReference type="EMDB" id="EMD-33629"/>
<dbReference type="EMDB" id="EMD-35572"/>
<dbReference type="EMDB" id="EMD-36948"/>
<dbReference type="EMDB" id="EMD-37106"/>
<dbReference type="EMDB" id="EMD-37107"/>
<dbReference type="EMDB" id="EMD-37108"/>
<dbReference type="EMDB" id="EMD-37109"/>
<dbReference type="EMDB" id="EMD-37110"/>
<dbReference type="EMDB" id="EMD-38059"/>
<dbReference type="EMDB" id="EMD-38060"/>
<dbReference type="EMDB" id="EMD-38061"/>
<dbReference type="EMDB" id="EMD-9648"/>
<dbReference type="EMDB" id="EMD-9751"/>
<dbReference type="SMR" id="Q96BI3"/>
<dbReference type="BioGRID" id="119296">
    <property type="interactions" value="63"/>
</dbReference>
<dbReference type="ComplexPortal" id="CPX-2176">
    <property type="entry name" value="Gamma-secretase complex, APH1A-PSEN1 variant"/>
</dbReference>
<dbReference type="ComplexPortal" id="CPX-4231">
    <property type="entry name" value="Gamma-secretase complex, APH1A-PSEN2 variant"/>
</dbReference>
<dbReference type="CORUM" id="Q96BI3"/>
<dbReference type="DIP" id="DIP-44671N"/>
<dbReference type="FunCoup" id="Q96BI3">
    <property type="interactions" value="1331"/>
</dbReference>
<dbReference type="IntAct" id="Q96BI3">
    <property type="interactions" value="46"/>
</dbReference>
<dbReference type="MINT" id="Q96BI3"/>
<dbReference type="STRING" id="9606.ENSP00000358105"/>
<dbReference type="BindingDB" id="Q96BI3"/>
<dbReference type="ChEMBL" id="CHEMBL2094135"/>
<dbReference type="DrugBank" id="DB11893">
    <property type="generic name" value="Avagacestat"/>
</dbReference>
<dbReference type="DrugBank" id="DB12263">
    <property type="generic name" value="Begacestat"/>
</dbReference>
<dbReference type="DrugBank" id="DB05171">
    <property type="generic name" value="E-2012"/>
</dbReference>
<dbReference type="DrugBank" id="DB16159">
    <property type="generic name" value="Esflurbiprofen"/>
</dbReference>
<dbReference type="DrugBank" id="DB12819">
    <property type="generic name" value="GSI-136"/>
</dbReference>
<dbReference type="DrugBank" id="DB16825">
    <property type="generic name" value="Itanapraced"/>
</dbReference>
<dbReference type="DrugBank" id="DB12852">
    <property type="generic name" value="MK-0752"/>
</dbReference>
<dbReference type="DrugBank" id="DB12005">
    <property type="generic name" value="Nirogacestat"/>
</dbReference>
<dbReference type="DrugBank" id="DB11870">
    <property type="generic name" value="RG-4733"/>
</dbReference>
<dbReference type="DrugBank" id="DB12463">
    <property type="generic name" value="Semagacestat"/>
</dbReference>
<dbReference type="DrugBank" id="DB05289">
    <property type="generic name" value="Tarenflurbil"/>
</dbReference>
<dbReference type="TCDB" id="1.A.121.1.2">
    <property type="family name" value="the anterior pharynx-defective water channel (aph-wc) family"/>
</dbReference>
<dbReference type="GlyGen" id="Q96BI3">
    <property type="glycosylation" value="2 sites, 1 O-linked glycan (1 site)"/>
</dbReference>
<dbReference type="iPTMnet" id="Q96BI3"/>
<dbReference type="PhosphoSitePlus" id="Q96BI3"/>
<dbReference type="SwissPalm" id="Q96BI3"/>
<dbReference type="BioMuta" id="APH1A"/>
<dbReference type="DMDM" id="37077707"/>
<dbReference type="jPOST" id="Q96BI3"/>
<dbReference type="MassIVE" id="Q96BI3"/>
<dbReference type="PaxDb" id="9606-ENSP00000358105"/>
<dbReference type="PeptideAtlas" id="Q96BI3"/>
<dbReference type="ProteomicsDB" id="4885"/>
<dbReference type="ProteomicsDB" id="76078">
    <molecule id="Q96BI3-1"/>
</dbReference>
<dbReference type="ProteomicsDB" id="76079">
    <molecule id="Q96BI3-2"/>
</dbReference>
<dbReference type="Pumba" id="Q96BI3"/>
<dbReference type="TopDownProteomics" id="Q96BI3-2">
    <molecule id="Q96BI3-2"/>
</dbReference>
<dbReference type="Antibodypedia" id="34020">
    <property type="antibodies" value="346 antibodies from 36 providers"/>
</dbReference>
<dbReference type="DNASU" id="51107"/>
<dbReference type="Ensembl" id="ENST00000360244.8">
    <molecule id="Q96BI3-2"/>
    <property type="protein sequence ID" value="ENSP00000353380.4"/>
    <property type="gene ID" value="ENSG00000117362.13"/>
</dbReference>
<dbReference type="Ensembl" id="ENST00000369109.8">
    <molecule id="Q96BI3-1"/>
    <property type="protein sequence ID" value="ENSP00000358105.3"/>
    <property type="gene ID" value="ENSG00000117362.13"/>
</dbReference>
<dbReference type="Ensembl" id="ENST00000414276.6">
    <molecule id="Q96BI3-3"/>
    <property type="protein sequence ID" value="ENSP00000397473.2"/>
    <property type="gene ID" value="ENSG00000117362.13"/>
</dbReference>
<dbReference type="GeneID" id="51107"/>
<dbReference type="KEGG" id="hsa:51107"/>
<dbReference type="MANE-Select" id="ENST00000369109.8">
    <property type="protein sequence ID" value="ENSP00000358105.3"/>
    <property type="RefSeq nucleotide sequence ID" value="NM_001077628.3"/>
    <property type="RefSeq protein sequence ID" value="NP_001071096.1"/>
</dbReference>
<dbReference type="UCSC" id="uc001ety.3">
    <molecule id="Q96BI3-1"/>
    <property type="organism name" value="human"/>
</dbReference>
<dbReference type="AGR" id="HGNC:29509"/>
<dbReference type="CTD" id="51107"/>
<dbReference type="DisGeNET" id="51107"/>
<dbReference type="GeneCards" id="APH1A"/>
<dbReference type="HGNC" id="HGNC:29509">
    <property type="gene designation" value="APH1A"/>
</dbReference>
<dbReference type="HPA" id="ENSG00000117362">
    <property type="expression patterns" value="Low tissue specificity"/>
</dbReference>
<dbReference type="MalaCards" id="APH1A"/>
<dbReference type="MIM" id="607629">
    <property type="type" value="gene"/>
</dbReference>
<dbReference type="neXtProt" id="NX_Q96BI3"/>
<dbReference type="OpenTargets" id="ENSG00000117362"/>
<dbReference type="PharmGKB" id="PA142672599"/>
<dbReference type="VEuPathDB" id="HostDB:ENSG00000117362"/>
<dbReference type="eggNOG" id="KOG3972">
    <property type="taxonomic scope" value="Eukaryota"/>
</dbReference>
<dbReference type="GeneTree" id="ENSGT00390000002049"/>
<dbReference type="HOGENOM" id="CLU_086389_0_0_1"/>
<dbReference type="InParanoid" id="Q96BI3"/>
<dbReference type="OMA" id="DTNNYLH"/>
<dbReference type="OrthoDB" id="6507463at2759"/>
<dbReference type="PAN-GO" id="Q96BI3">
    <property type="GO annotations" value="7 GO annotations based on evolutionary models"/>
</dbReference>
<dbReference type="PhylomeDB" id="Q96BI3"/>
<dbReference type="TreeFam" id="TF314362"/>
<dbReference type="PathwayCommons" id="Q96BI3"/>
<dbReference type="Reactome" id="R-HSA-1251985">
    <property type="pathway name" value="Nuclear signaling by ERBB4"/>
</dbReference>
<dbReference type="Reactome" id="R-HSA-193692">
    <property type="pathway name" value="Regulated proteolysis of p75NTR"/>
</dbReference>
<dbReference type="Reactome" id="R-HSA-205043">
    <property type="pathway name" value="NRIF signals cell death from the nucleus"/>
</dbReference>
<dbReference type="Reactome" id="R-HSA-2122948">
    <property type="pathway name" value="Activated NOTCH1 Transmits Signal to the Nucleus"/>
</dbReference>
<dbReference type="Reactome" id="R-HSA-2644606">
    <property type="pathway name" value="Constitutive Signaling by NOTCH1 PEST Domain Mutants"/>
</dbReference>
<dbReference type="Reactome" id="R-HSA-2894862">
    <property type="pathway name" value="Constitutive Signaling by NOTCH1 HD+PEST Domain Mutants"/>
</dbReference>
<dbReference type="Reactome" id="R-HSA-2979096">
    <property type="pathway name" value="NOTCH2 Activation and Transmission of Signal to the Nucleus"/>
</dbReference>
<dbReference type="Reactome" id="R-HSA-3928665">
    <property type="pathway name" value="EPH-ephrin mediated repulsion of cells"/>
</dbReference>
<dbReference type="Reactome" id="R-HSA-9013507">
    <property type="pathway name" value="NOTCH3 Activation and Transmission of Signal to the Nucleus"/>
</dbReference>
<dbReference type="Reactome" id="R-HSA-9013700">
    <property type="pathway name" value="NOTCH4 Activation and Transmission of Signal to the Nucleus"/>
</dbReference>
<dbReference type="Reactome" id="R-HSA-9017802">
    <property type="pathway name" value="Noncanonical activation of NOTCH3"/>
</dbReference>
<dbReference type="Reactome" id="R-HSA-977225">
    <property type="pathway name" value="Amyloid fiber formation"/>
</dbReference>
<dbReference type="Reactome" id="R-HSA-9839383">
    <property type="pathway name" value="TGFBR3 PTM regulation"/>
</dbReference>
<dbReference type="SignaLink" id="Q96BI3"/>
<dbReference type="SIGNOR" id="Q96BI3"/>
<dbReference type="BioGRID-ORCS" id="51107">
    <property type="hits" value="14 hits in 1154 CRISPR screens"/>
</dbReference>
<dbReference type="ChiTaRS" id="APH1A">
    <property type="organism name" value="human"/>
</dbReference>
<dbReference type="EvolutionaryTrace" id="Q96BI3"/>
<dbReference type="GenomeRNAi" id="51107"/>
<dbReference type="Pharos" id="Q96BI3">
    <property type="development level" value="Tbio"/>
</dbReference>
<dbReference type="PRO" id="PR:Q96BI3"/>
<dbReference type="Proteomes" id="UP000005640">
    <property type="component" value="Chromosome 1"/>
</dbReference>
<dbReference type="RNAct" id="Q96BI3">
    <property type="molecule type" value="protein"/>
</dbReference>
<dbReference type="Bgee" id="ENSG00000117362">
    <property type="expression patterns" value="Expressed in skin of leg and 197 other cell types or tissues"/>
</dbReference>
<dbReference type="ExpressionAtlas" id="Q96BI3">
    <property type="expression patterns" value="baseline and differential"/>
</dbReference>
<dbReference type="GO" id="GO:0005769">
    <property type="term" value="C:early endosome"/>
    <property type="evidence" value="ECO:0007669"/>
    <property type="project" value="Ensembl"/>
</dbReference>
<dbReference type="GO" id="GO:0005783">
    <property type="term" value="C:endoplasmic reticulum"/>
    <property type="evidence" value="ECO:0000314"/>
    <property type="project" value="HGNC-UCL"/>
</dbReference>
<dbReference type="GO" id="GO:0005789">
    <property type="term" value="C:endoplasmic reticulum membrane"/>
    <property type="evidence" value="ECO:0000303"/>
    <property type="project" value="ComplexPortal"/>
</dbReference>
<dbReference type="GO" id="GO:0010008">
    <property type="term" value="C:endosome membrane"/>
    <property type="evidence" value="ECO:0000304"/>
    <property type="project" value="Reactome"/>
</dbReference>
<dbReference type="GO" id="GO:0070765">
    <property type="term" value="C:gamma-secretase complex"/>
    <property type="evidence" value="ECO:0000314"/>
    <property type="project" value="UniProtKB"/>
</dbReference>
<dbReference type="GO" id="GO:0005794">
    <property type="term" value="C:Golgi apparatus"/>
    <property type="evidence" value="ECO:0000314"/>
    <property type="project" value="HGNC-UCL"/>
</dbReference>
<dbReference type="GO" id="GO:0032580">
    <property type="term" value="C:Golgi cisterna membrane"/>
    <property type="evidence" value="ECO:0007669"/>
    <property type="project" value="UniProtKB-SubCell"/>
</dbReference>
<dbReference type="GO" id="GO:0000139">
    <property type="term" value="C:Golgi membrane"/>
    <property type="evidence" value="ECO:0000303"/>
    <property type="project" value="ComplexPortal"/>
</dbReference>
<dbReference type="GO" id="GO:0016020">
    <property type="term" value="C:membrane"/>
    <property type="evidence" value="ECO:0000314"/>
    <property type="project" value="UniProtKB"/>
</dbReference>
<dbReference type="GO" id="GO:0005886">
    <property type="term" value="C:plasma membrane"/>
    <property type="evidence" value="ECO:0000314"/>
    <property type="project" value="HGNC-UCL"/>
</dbReference>
<dbReference type="GO" id="GO:0042734">
    <property type="term" value="C:presynaptic membrane"/>
    <property type="evidence" value="ECO:0007669"/>
    <property type="project" value="Ensembl"/>
</dbReference>
<dbReference type="GO" id="GO:0008021">
    <property type="term" value="C:synaptic vesicle"/>
    <property type="evidence" value="ECO:0007669"/>
    <property type="project" value="Ensembl"/>
</dbReference>
<dbReference type="GO" id="GO:0061133">
    <property type="term" value="F:endopeptidase activator activity"/>
    <property type="evidence" value="ECO:0000315"/>
    <property type="project" value="ARUK-UCL"/>
</dbReference>
<dbReference type="GO" id="GO:0019899">
    <property type="term" value="F:enzyme binding"/>
    <property type="evidence" value="ECO:0007669"/>
    <property type="project" value="Ensembl"/>
</dbReference>
<dbReference type="GO" id="GO:0030674">
    <property type="term" value="F:protein-macromolecule adaptor activity"/>
    <property type="evidence" value="ECO:0000315"/>
    <property type="project" value="ARUK-UCL"/>
</dbReference>
<dbReference type="GO" id="GO:0042987">
    <property type="term" value="P:amyloid precursor protein catabolic process"/>
    <property type="evidence" value="ECO:0000314"/>
    <property type="project" value="ARUK-UCL"/>
</dbReference>
<dbReference type="GO" id="GO:0042982">
    <property type="term" value="P:amyloid precursor protein metabolic process"/>
    <property type="evidence" value="ECO:0000314"/>
    <property type="project" value="UniProtKB"/>
</dbReference>
<dbReference type="GO" id="GO:0034205">
    <property type="term" value="P:amyloid-beta formation"/>
    <property type="evidence" value="ECO:0000314"/>
    <property type="project" value="ARUK-UCL"/>
</dbReference>
<dbReference type="GO" id="GO:0006509">
    <property type="term" value="P:membrane protein ectodomain proteolysis"/>
    <property type="evidence" value="ECO:0000314"/>
    <property type="project" value="HGNC-UCL"/>
</dbReference>
<dbReference type="GO" id="GO:0031293">
    <property type="term" value="P:membrane protein intracellular domain proteolysis"/>
    <property type="evidence" value="ECO:0000314"/>
    <property type="project" value="ComplexPortal"/>
</dbReference>
<dbReference type="GO" id="GO:0001656">
    <property type="term" value="P:metanephros development"/>
    <property type="evidence" value="ECO:0007669"/>
    <property type="project" value="Ensembl"/>
</dbReference>
<dbReference type="GO" id="GO:0007220">
    <property type="term" value="P:Notch receptor processing"/>
    <property type="evidence" value="ECO:0000314"/>
    <property type="project" value="ARUK-UCL"/>
</dbReference>
<dbReference type="GO" id="GO:0007219">
    <property type="term" value="P:Notch signaling pathway"/>
    <property type="evidence" value="ECO:0000318"/>
    <property type="project" value="GO_Central"/>
</dbReference>
<dbReference type="GO" id="GO:0016485">
    <property type="term" value="P:protein processing"/>
    <property type="evidence" value="ECO:0000314"/>
    <property type="project" value="HGNC-UCL"/>
</dbReference>
<dbReference type="InterPro" id="IPR009294">
    <property type="entry name" value="Aph-1"/>
</dbReference>
<dbReference type="PANTHER" id="PTHR12889">
    <property type="entry name" value="GAMMA-SECRETASE SUBUNIT APH-1"/>
    <property type="match status" value="1"/>
</dbReference>
<dbReference type="Pfam" id="PF06105">
    <property type="entry name" value="Aph-1"/>
    <property type="match status" value="1"/>
</dbReference>
<gene>
    <name type="primary">APH1A</name>
    <name type="synonym">PSF</name>
    <name type="ORF">CGI-78</name>
    <name type="ORF">UNQ579/PRO1141</name>
</gene>
<evidence type="ECO:0000269" key="1">
    <source>
    </source>
</evidence>
<evidence type="ECO:0000269" key="2">
    <source>
    </source>
</evidence>
<evidence type="ECO:0000269" key="3">
    <source>
    </source>
</evidence>
<evidence type="ECO:0000269" key="4">
    <source>
    </source>
</evidence>
<evidence type="ECO:0000269" key="5">
    <source>
    </source>
</evidence>
<evidence type="ECO:0000269" key="6">
    <source>
    </source>
</evidence>
<evidence type="ECO:0000269" key="7">
    <source>
    </source>
</evidence>
<evidence type="ECO:0000269" key="8">
    <source>
    </source>
</evidence>
<evidence type="ECO:0000269" key="9">
    <source>
    </source>
</evidence>
<evidence type="ECO:0000269" key="10">
    <source>
    </source>
</evidence>
<evidence type="ECO:0000269" key="11">
    <source>
    </source>
</evidence>
<evidence type="ECO:0000269" key="12">
    <source>
    </source>
</evidence>
<evidence type="ECO:0000269" key="13">
    <source>
    </source>
</evidence>
<evidence type="ECO:0000303" key="14">
    <source>
    </source>
</evidence>
<evidence type="ECO:0000303" key="15">
    <source>
    </source>
</evidence>
<evidence type="ECO:0000303" key="16">
    <source>
    </source>
</evidence>
<evidence type="ECO:0000303" key="17">
    <source>
    </source>
</evidence>
<evidence type="ECO:0000303" key="18">
    <source ref="2"/>
</evidence>
<evidence type="ECO:0000305" key="19"/>
<evidence type="ECO:0000305" key="20">
    <source>
    </source>
</evidence>
<evidence type="ECO:0007829" key="21">
    <source>
        <dbReference type="PDB" id="7D8X"/>
    </source>
</evidence>
<evidence type="ECO:0007829" key="22">
    <source>
        <dbReference type="PDB" id="8KCS"/>
    </source>
</evidence>
<evidence type="ECO:0007829" key="23">
    <source>
        <dbReference type="PDB" id="8KCT"/>
    </source>
</evidence>
<accession>Q96BI3</accession>
<accession>B4DQK0</accession>
<accession>Q5TB22</accession>
<accession>Q5TB23</accession>
<accession>Q969R6</accession>
<accession>Q9BVG0</accession>
<accession>Q9Y386</accession>
<protein>
    <recommendedName>
        <fullName>Gamma-secretase subunit APH-1A</fullName>
        <shortName>APH-1a</shortName>
    </recommendedName>
    <alternativeName>
        <fullName>Aph-1alpha</fullName>
    </alternativeName>
    <alternativeName>
        <fullName>Presenilin-stabilization factor</fullName>
    </alternativeName>
</protein>
<sequence length="265" mass="28996">MGAAVFFGCTFVAFGPAFALFLITVAGDPLRVIILVAGAFFWLVSLLLASVVWFILVHVTDRSDARLQYGLLIFGAAVSVLLQEVFRFAYYKLLKKADEGLASLSEDGRSPISIRQMAYVSGLSFGIISGVFSVINILADALGPGVVGIHGDSPYYFLTSAFLTAAIILLHTFWGVVFFDACERRRYWALGLVVGSHLLTSGLTFLNPWYEASLLPIYAVTVSMGLWAFITAGGSLRSIQRSLLCRRQEDSRVMVYSALRIPPED</sequence>